<evidence type="ECO:0000255" key="1">
    <source>
        <dbReference type="HAMAP-Rule" id="MF_01023"/>
    </source>
</evidence>
<dbReference type="EC" id="2.6.1.9" evidence="1"/>
<dbReference type="EMBL" id="CP001127">
    <property type="protein sequence ID" value="ACF92866.1"/>
    <property type="molecule type" value="Genomic_DNA"/>
</dbReference>
<dbReference type="RefSeq" id="WP_000102715.1">
    <property type="nucleotide sequence ID" value="NC_011094.1"/>
</dbReference>
<dbReference type="SMR" id="B4TMR6"/>
<dbReference type="KEGG" id="sew:SeSA_A2301"/>
<dbReference type="HOGENOM" id="CLU_017584_3_1_6"/>
<dbReference type="UniPathway" id="UPA00031">
    <property type="reaction ID" value="UER00012"/>
</dbReference>
<dbReference type="Proteomes" id="UP000001865">
    <property type="component" value="Chromosome"/>
</dbReference>
<dbReference type="GO" id="GO:0004400">
    <property type="term" value="F:histidinol-phosphate transaminase activity"/>
    <property type="evidence" value="ECO:0007669"/>
    <property type="project" value="UniProtKB-UniRule"/>
</dbReference>
<dbReference type="GO" id="GO:0030170">
    <property type="term" value="F:pyridoxal phosphate binding"/>
    <property type="evidence" value="ECO:0007669"/>
    <property type="project" value="InterPro"/>
</dbReference>
<dbReference type="GO" id="GO:0000105">
    <property type="term" value="P:L-histidine biosynthetic process"/>
    <property type="evidence" value="ECO:0007669"/>
    <property type="project" value="UniProtKB-UniRule"/>
</dbReference>
<dbReference type="CDD" id="cd00609">
    <property type="entry name" value="AAT_like"/>
    <property type="match status" value="1"/>
</dbReference>
<dbReference type="FunFam" id="3.40.640.10:FF:000032">
    <property type="entry name" value="Histidinol-phosphate aminotransferase"/>
    <property type="match status" value="1"/>
</dbReference>
<dbReference type="Gene3D" id="3.90.1150.10">
    <property type="entry name" value="Aspartate Aminotransferase, domain 1"/>
    <property type="match status" value="1"/>
</dbReference>
<dbReference type="Gene3D" id="3.40.640.10">
    <property type="entry name" value="Type I PLP-dependent aspartate aminotransferase-like (Major domain)"/>
    <property type="match status" value="1"/>
</dbReference>
<dbReference type="HAMAP" id="MF_01023">
    <property type="entry name" value="HisC_aminotrans_2"/>
    <property type="match status" value="1"/>
</dbReference>
<dbReference type="InterPro" id="IPR001917">
    <property type="entry name" value="Aminotrans_II_pyridoxalP_BS"/>
</dbReference>
<dbReference type="InterPro" id="IPR004839">
    <property type="entry name" value="Aminotransferase_I/II_large"/>
</dbReference>
<dbReference type="InterPro" id="IPR005861">
    <property type="entry name" value="HisP_aminotrans"/>
</dbReference>
<dbReference type="InterPro" id="IPR015424">
    <property type="entry name" value="PyrdxlP-dep_Trfase"/>
</dbReference>
<dbReference type="InterPro" id="IPR015421">
    <property type="entry name" value="PyrdxlP-dep_Trfase_major"/>
</dbReference>
<dbReference type="InterPro" id="IPR015422">
    <property type="entry name" value="PyrdxlP-dep_Trfase_small"/>
</dbReference>
<dbReference type="NCBIfam" id="TIGR01141">
    <property type="entry name" value="hisC"/>
    <property type="match status" value="1"/>
</dbReference>
<dbReference type="PANTHER" id="PTHR42885:SF2">
    <property type="entry name" value="HISTIDINOL-PHOSPHATE AMINOTRANSFERASE"/>
    <property type="match status" value="1"/>
</dbReference>
<dbReference type="PANTHER" id="PTHR42885">
    <property type="entry name" value="HISTIDINOL-PHOSPHATE AMINOTRANSFERASE-RELATED"/>
    <property type="match status" value="1"/>
</dbReference>
<dbReference type="Pfam" id="PF00155">
    <property type="entry name" value="Aminotran_1_2"/>
    <property type="match status" value="1"/>
</dbReference>
<dbReference type="SUPFAM" id="SSF53383">
    <property type="entry name" value="PLP-dependent transferases"/>
    <property type="match status" value="1"/>
</dbReference>
<dbReference type="PROSITE" id="PS00599">
    <property type="entry name" value="AA_TRANSFER_CLASS_2"/>
    <property type="match status" value="1"/>
</dbReference>
<proteinExistence type="inferred from homology"/>
<reference key="1">
    <citation type="journal article" date="2011" name="J. Bacteriol.">
        <title>Comparative genomics of 28 Salmonella enterica isolates: evidence for CRISPR-mediated adaptive sublineage evolution.</title>
        <authorList>
            <person name="Fricke W.F."/>
            <person name="Mammel M.K."/>
            <person name="McDermott P.F."/>
            <person name="Tartera C."/>
            <person name="White D.G."/>
            <person name="Leclerc J.E."/>
            <person name="Ravel J."/>
            <person name="Cebula T.A."/>
        </authorList>
    </citation>
    <scope>NUCLEOTIDE SEQUENCE [LARGE SCALE GENOMIC DNA]</scope>
    <source>
        <strain>CVM19633</strain>
    </source>
</reference>
<accession>B4TMR6</accession>
<keyword id="KW-0028">Amino-acid biosynthesis</keyword>
<keyword id="KW-0032">Aminotransferase</keyword>
<keyword id="KW-0368">Histidine biosynthesis</keyword>
<keyword id="KW-0663">Pyridoxal phosphate</keyword>
<keyword id="KW-0808">Transferase</keyword>
<comment type="catalytic activity">
    <reaction evidence="1">
        <text>L-histidinol phosphate + 2-oxoglutarate = 3-(imidazol-4-yl)-2-oxopropyl phosphate + L-glutamate</text>
        <dbReference type="Rhea" id="RHEA:23744"/>
        <dbReference type="ChEBI" id="CHEBI:16810"/>
        <dbReference type="ChEBI" id="CHEBI:29985"/>
        <dbReference type="ChEBI" id="CHEBI:57766"/>
        <dbReference type="ChEBI" id="CHEBI:57980"/>
        <dbReference type="EC" id="2.6.1.9"/>
    </reaction>
</comment>
<comment type="cofactor">
    <cofactor evidence="1">
        <name>pyridoxal 5'-phosphate</name>
        <dbReference type="ChEBI" id="CHEBI:597326"/>
    </cofactor>
</comment>
<comment type="pathway">
    <text evidence="1">Amino-acid biosynthesis; L-histidine biosynthesis; L-histidine from 5-phospho-alpha-D-ribose 1-diphosphate: step 7/9.</text>
</comment>
<comment type="subunit">
    <text evidence="1">Homodimer.</text>
</comment>
<comment type="similarity">
    <text evidence="1">Belongs to the class-II pyridoxal-phosphate-dependent aminotransferase family. Histidinol-phosphate aminotransferase subfamily.</text>
</comment>
<name>HIS8_SALSV</name>
<protein>
    <recommendedName>
        <fullName evidence="1">Histidinol-phosphate aminotransferase</fullName>
        <ecNumber evidence="1">2.6.1.9</ecNumber>
    </recommendedName>
    <alternativeName>
        <fullName evidence="1">Imidazole acetol-phosphate transaminase</fullName>
    </alternativeName>
</protein>
<gene>
    <name evidence="1" type="primary">hisC</name>
    <name type="ordered locus">SeSA_A2301</name>
</gene>
<organism>
    <name type="scientific">Salmonella schwarzengrund (strain CVM19633)</name>
    <dbReference type="NCBI Taxonomy" id="439843"/>
    <lineage>
        <taxon>Bacteria</taxon>
        <taxon>Pseudomonadati</taxon>
        <taxon>Pseudomonadota</taxon>
        <taxon>Gammaproteobacteria</taxon>
        <taxon>Enterobacterales</taxon>
        <taxon>Enterobacteriaceae</taxon>
        <taxon>Salmonella</taxon>
    </lineage>
</organism>
<sequence length="359" mass="39699">MSTENTLSVADLARENVRNLVPYQSARRLGGNGDVWLNANEFPTAVEFQLTQQTLNRYPECQPKAVIENYAQYAGVKPEQVLVSRGADEGIELVIRAFCEPGKDAILYCPPTYGMYSVSAETIGVERRTVPALENWQLDLQGISDNLDGTKVVFVCSPNNPTGQLINPQDLRTLLELTRGKAIVVADEAYIEFCPQATLTGWLVEYPHLVILRTLSKAFALAGLRCGFTLANEEVINLLLKVIAPYPLSTPVADIAAQALSPQGINAMRDRVAQTVQERQYLVNALQQTACVEHVFDSETNYILARFTASSSVFKSLWDQGIILRDQNKQPSLSGCLRITVGTRQENQRVIDALRAEPV</sequence>
<feature type="chain" id="PRO_1000135423" description="Histidinol-phosphate aminotransferase">
    <location>
        <begin position="1"/>
        <end position="359"/>
    </location>
</feature>
<feature type="modified residue" description="N6-(pyridoxal phosphate)lysine" evidence="1">
    <location>
        <position position="217"/>
    </location>
</feature>